<proteinExistence type="inferred from homology"/>
<name>PRMA_STRP8</name>
<organism>
    <name type="scientific">Streptococcus pyogenes serotype M18 (strain MGAS8232)</name>
    <dbReference type="NCBI Taxonomy" id="186103"/>
    <lineage>
        <taxon>Bacteria</taxon>
        <taxon>Bacillati</taxon>
        <taxon>Bacillota</taxon>
        <taxon>Bacilli</taxon>
        <taxon>Lactobacillales</taxon>
        <taxon>Streptococcaceae</taxon>
        <taxon>Streptococcus</taxon>
    </lineage>
</organism>
<accession>Q8NZ98</accession>
<evidence type="ECO:0000255" key="1">
    <source>
        <dbReference type="HAMAP-Rule" id="MF_00735"/>
    </source>
</evidence>
<keyword id="KW-0963">Cytoplasm</keyword>
<keyword id="KW-0489">Methyltransferase</keyword>
<keyword id="KW-0949">S-adenosyl-L-methionine</keyword>
<keyword id="KW-0808">Transferase</keyword>
<dbReference type="EC" id="2.1.1.-" evidence="1"/>
<dbReference type="EMBL" id="AE009949">
    <property type="protein sequence ID" value="AAL98526.1"/>
    <property type="molecule type" value="Genomic_DNA"/>
</dbReference>
<dbReference type="RefSeq" id="WP_011018259.1">
    <property type="nucleotide sequence ID" value="NC_003485.1"/>
</dbReference>
<dbReference type="SMR" id="Q8NZ98"/>
<dbReference type="KEGG" id="spm:spyM18_2052"/>
<dbReference type="HOGENOM" id="CLU_049382_0_1_9"/>
<dbReference type="GO" id="GO:0005737">
    <property type="term" value="C:cytoplasm"/>
    <property type="evidence" value="ECO:0007669"/>
    <property type="project" value="UniProtKB-SubCell"/>
</dbReference>
<dbReference type="GO" id="GO:0016279">
    <property type="term" value="F:protein-lysine N-methyltransferase activity"/>
    <property type="evidence" value="ECO:0007669"/>
    <property type="project" value="RHEA"/>
</dbReference>
<dbReference type="GO" id="GO:0032259">
    <property type="term" value="P:methylation"/>
    <property type="evidence" value="ECO:0007669"/>
    <property type="project" value="UniProtKB-KW"/>
</dbReference>
<dbReference type="CDD" id="cd02440">
    <property type="entry name" value="AdoMet_MTases"/>
    <property type="match status" value="1"/>
</dbReference>
<dbReference type="Gene3D" id="3.40.50.150">
    <property type="entry name" value="Vaccinia Virus protein VP39"/>
    <property type="match status" value="1"/>
</dbReference>
<dbReference type="HAMAP" id="MF_00735">
    <property type="entry name" value="Methyltr_PrmA"/>
    <property type="match status" value="1"/>
</dbReference>
<dbReference type="InterPro" id="IPR050078">
    <property type="entry name" value="Ribosomal_L11_MeTrfase_PrmA"/>
</dbReference>
<dbReference type="InterPro" id="IPR004498">
    <property type="entry name" value="Ribosomal_PrmA_MeTrfase"/>
</dbReference>
<dbReference type="InterPro" id="IPR029063">
    <property type="entry name" value="SAM-dependent_MTases_sf"/>
</dbReference>
<dbReference type="NCBIfam" id="TIGR00406">
    <property type="entry name" value="prmA"/>
    <property type="match status" value="1"/>
</dbReference>
<dbReference type="PANTHER" id="PTHR43648">
    <property type="entry name" value="ELECTRON TRANSFER FLAVOPROTEIN BETA SUBUNIT LYSINE METHYLTRANSFERASE"/>
    <property type="match status" value="1"/>
</dbReference>
<dbReference type="PANTHER" id="PTHR43648:SF1">
    <property type="entry name" value="ELECTRON TRANSFER FLAVOPROTEIN BETA SUBUNIT LYSINE METHYLTRANSFERASE"/>
    <property type="match status" value="1"/>
</dbReference>
<dbReference type="Pfam" id="PF06325">
    <property type="entry name" value="PrmA"/>
    <property type="match status" value="1"/>
</dbReference>
<dbReference type="PIRSF" id="PIRSF000401">
    <property type="entry name" value="RPL11_MTase"/>
    <property type="match status" value="1"/>
</dbReference>
<dbReference type="SUPFAM" id="SSF53335">
    <property type="entry name" value="S-adenosyl-L-methionine-dependent methyltransferases"/>
    <property type="match status" value="1"/>
</dbReference>
<feature type="chain" id="PRO_0000192321" description="Ribosomal protein L11 methyltransferase">
    <location>
        <begin position="1"/>
        <end position="317"/>
    </location>
</feature>
<feature type="binding site" evidence="1">
    <location>
        <position position="158"/>
    </location>
    <ligand>
        <name>S-adenosyl-L-methionine</name>
        <dbReference type="ChEBI" id="CHEBI:59789"/>
    </ligand>
</feature>
<feature type="binding site" evidence="1">
    <location>
        <position position="179"/>
    </location>
    <ligand>
        <name>S-adenosyl-L-methionine</name>
        <dbReference type="ChEBI" id="CHEBI:59789"/>
    </ligand>
</feature>
<feature type="binding site" evidence="1">
    <location>
        <position position="201"/>
    </location>
    <ligand>
        <name>S-adenosyl-L-methionine</name>
        <dbReference type="ChEBI" id="CHEBI:59789"/>
    </ligand>
</feature>
<feature type="binding site" evidence="1">
    <location>
        <position position="244"/>
    </location>
    <ligand>
        <name>S-adenosyl-L-methionine</name>
        <dbReference type="ChEBI" id="CHEBI:59789"/>
    </ligand>
</feature>
<reference key="1">
    <citation type="journal article" date="2002" name="Proc. Natl. Acad. Sci. U.S.A.">
        <title>Genome sequence and comparative microarray analysis of serotype M18 group A Streptococcus strains associated with acute rheumatic fever outbreaks.</title>
        <authorList>
            <person name="Smoot J.C."/>
            <person name="Barbian K.D."/>
            <person name="Van Gompel J.J."/>
            <person name="Smoot L.M."/>
            <person name="Chaussee M.S."/>
            <person name="Sylva G.L."/>
            <person name="Sturdevant D.E."/>
            <person name="Ricklefs S.M."/>
            <person name="Porcella S.F."/>
            <person name="Parkins L.D."/>
            <person name="Beres S.B."/>
            <person name="Campbell D.S."/>
            <person name="Smith T.M."/>
            <person name="Zhang Q."/>
            <person name="Kapur V."/>
            <person name="Daly J.A."/>
            <person name="Veasy L.G."/>
            <person name="Musser J.M."/>
        </authorList>
    </citation>
    <scope>NUCLEOTIDE SEQUENCE [LARGE SCALE GENOMIC DNA]</scope>
    <source>
        <strain>MGAS8232</strain>
    </source>
</reference>
<comment type="function">
    <text evidence="1">Methylates ribosomal protein L11.</text>
</comment>
<comment type="catalytic activity">
    <reaction evidence="1">
        <text>L-lysyl-[protein] + 3 S-adenosyl-L-methionine = N(6),N(6),N(6)-trimethyl-L-lysyl-[protein] + 3 S-adenosyl-L-homocysteine + 3 H(+)</text>
        <dbReference type="Rhea" id="RHEA:54192"/>
        <dbReference type="Rhea" id="RHEA-COMP:9752"/>
        <dbReference type="Rhea" id="RHEA-COMP:13826"/>
        <dbReference type="ChEBI" id="CHEBI:15378"/>
        <dbReference type="ChEBI" id="CHEBI:29969"/>
        <dbReference type="ChEBI" id="CHEBI:57856"/>
        <dbReference type="ChEBI" id="CHEBI:59789"/>
        <dbReference type="ChEBI" id="CHEBI:61961"/>
    </reaction>
</comment>
<comment type="subcellular location">
    <subcellularLocation>
        <location evidence="1">Cytoplasm</location>
    </subcellularLocation>
</comment>
<comment type="similarity">
    <text evidence="1">Belongs to the methyltransferase superfamily. PrmA family.</text>
</comment>
<gene>
    <name evidence="1" type="primary">prmA</name>
    <name type="ordered locus">spyM18_2052</name>
</gene>
<sequence length="317" mass="34318">METWQEVTVHVHRDAQEAVSHVLIETGSQGVAIADSADYIGQKDRFGELYPDVEQSDMIAITAYYPSSTNLADVIATINEQLAELASFGLQVGQVTVDSQELAEEDWADNWKKYYEPARITHDLTIVPSWTDYDASAGEKVIKLDPGMAFGTGTHPTTKMSLFALEQILRGGETVIDVGTGSGVLSIASSLLGAKTIYAYDLDDVAVRVAQENIDLNQGTDNIHVAAGDLLKGVSQEADVIVANILADILVLLTDDAYRLVKKEGYLILSGIISEKLDMVLEAAFSAGFFLETHMIQGEWNALVFKKTDDISGVIGG</sequence>
<protein>
    <recommendedName>
        <fullName evidence="1">Ribosomal protein L11 methyltransferase</fullName>
        <shortName evidence="1">L11 Mtase</shortName>
        <ecNumber evidence="1">2.1.1.-</ecNumber>
    </recommendedName>
</protein>